<organism evidence="8">
    <name type="scientific">Nonlabens dokdonensis (strain DSM 17205 / KCTC 12402 / DSW-6)</name>
    <name type="common">Donghaeana dokdonensis</name>
    <dbReference type="NCBI Taxonomy" id="592029"/>
    <lineage>
        <taxon>Bacteria</taxon>
        <taxon>Pseudomonadati</taxon>
        <taxon>Bacteroidota</taxon>
        <taxon>Flavobacteriia</taxon>
        <taxon>Flavobacteriales</taxon>
        <taxon>Flavobacteriaceae</taxon>
        <taxon>Nonlabens</taxon>
    </lineage>
</organism>
<keyword id="KW-0002">3D-structure</keyword>
<keyword id="KW-0125">Carotenoid biosynthesis</keyword>
<keyword id="KW-0274">FAD</keyword>
<keyword id="KW-0285">Flavoprotein</keyword>
<keyword id="KW-0547">Nucleotide-binding</keyword>
<keyword id="KW-0560">Oxidoreductase</keyword>
<feature type="chain" id="PRO_0000447219" description="1-hydroxycarotenoid 3,4-desaturase">
    <location>
        <begin position="1"/>
        <end position="487"/>
    </location>
</feature>
<feature type="binding site" evidence="3 9">
    <location>
        <position position="12"/>
    </location>
    <ligand>
        <name>FAD</name>
        <dbReference type="ChEBI" id="CHEBI:57692"/>
    </ligand>
</feature>
<feature type="binding site" evidence="3 9">
    <location>
        <position position="31"/>
    </location>
    <ligand>
        <name>FAD</name>
        <dbReference type="ChEBI" id="CHEBI:57692"/>
    </ligand>
</feature>
<feature type="binding site" evidence="3 9">
    <location>
        <position position="39"/>
    </location>
    <ligand>
        <name>FAD</name>
        <dbReference type="ChEBI" id="CHEBI:57692"/>
    </ligand>
</feature>
<feature type="binding site" evidence="3 9">
    <location>
        <begin position="55"/>
        <end position="56"/>
    </location>
    <ligand>
        <name>FAD</name>
        <dbReference type="ChEBI" id="CHEBI:57692"/>
    </ligand>
</feature>
<feature type="binding site" evidence="3 9">
    <location>
        <position position="247"/>
    </location>
    <ligand>
        <name>FAD</name>
        <dbReference type="ChEBI" id="CHEBI:57692"/>
    </ligand>
</feature>
<feature type="binding site" evidence="3 9">
    <location>
        <position position="275"/>
    </location>
    <ligand>
        <name>FAD</name>
        <dbReference type="ChEBI" id="CHEBI:57692"/>
    </ligand>
</feature>
<feature type="binding site" evidence="3 9">
    <location>
        <position position="431"/>
    </location>
    <ligand>
        <name>FAD</name>
        <dbReference type="ChEBI" id="CHEBI:57692"/>
    </ligand>
</feature>
<feature type="binding site" evidence="3 9">
    <location>
        <position position="461"/>
    </location>
    <ligand>
        <name>FAD</name>
        <dbReference type="ChEBI" id="CHEBI:57692"/>
    </ligand>
</feature>
<feature type="binding site" evidence="3 9">
    <location>
        <begin position="468"/>
        <end position="469"/>
    </location>
    <ligand>
        <name>FAD</name>
        <dbReference type="ChEBI" id="CHEBI:57692"/>
    </ligand>
</feature>
<feature type="strand" evidence="10">
    <location>
        <begin position="3"/>
        <end position="7"/>
    </location>
</feature>
<feature type="helix" evidence="10">
    <location>
        <begin position="11"/>
        <end position="22"/>
    </location>
</feature>
<feature type="strand" evidence="10">
    <location>
        <begin position="26"/>
        <end position="30"/>
    </location>
</feature>
<feature type="strand" evidence="10">
    <location>
        <begin position="32"/>
        <end position="37"/>
    </location>
</feature>
<feature type="strand" evidence="10">
    <location>
        <begin position="42"/>
        <end position="45"/>
    </location>
</feature>
<feature type="strand" evidence="10">
    <location>
        <begin position="48"/>
        <end position="51"/>
    </location>
</feature>
<feature type="helix" evidence="10">
    <location>
        <begin position="61"/>
        <end position="67"/>
    </location>
</feature>
<feature type="strand" evidence="10">
    <location>
        <begin position="79"/>
        <end position="81"/>
    </location>
</feature>
<feature type="strand" evidence="10">
    <location>
        <begin position="83"/>
        <end position="89"/>
    </location>
</feature>
<feature type="strand" evidence="10">
    <location>
        <begin position="95"/>
        <end position="101"/>
    </location>
</feature>
<feature type="helix" evidence="10">
    <location>
        <begin position="102"/>
        <end position="113"/>
    </location>
</feature>
<feature type="helix" evidence="10">
    <location>
        <begin position="117"/>
        <end position="138"/>
    </location>
</feature>
<feature type="helix" evidence="10">
    <location>
        <begin position="155"/>
        <end position="164"/>
    </location>
</feature>
<feature type="turn" evidence="10">
    <location>
        <begin position="165"/>
        <end position="167"/>
    </location>
</feature>
<feature type="helix" evidence="10">
    <location>
        <begin position="170"/>
        <end position="174"/>
    </location>
</feature>
<feature type="strand" evidence="10">
    <location>
        <begin position="177"/>
        <end position="179"/>
    </location>
</feature>
<feature type="helix" evidence="10">
    <location>
        <begin position="180"/>
        <end position="187"/>
    </location>
</feature>
<feature type="helix" evidence="10">
    <location>
        <begin position="188"/>
        <end position="193"/>
    </location>
</feature>
<feature type="turn" evidence="10">
    <location>
        <begin position="197"/>
        <end position="199"/>
    </location>
</feature>
<feature type="helix" evidence="10">
    <location>
        <begin position="202"/>
        <end position="206"/>
    </location>
</feature>
<feature type="helix" evidence="10">
    <location>
        <begin position="207"/>
        <end position="212"/>
    </location>
</feature>
<feature type="strand" evidence="10">
    <location>
        <begin position="217"/>
        <end position="219"/>
    </location>
</feature>
<feature type="helix" evidence="10">
    <location>
        <begin position="224"/>
        <end position="236"/>
    </location>
</feature>
<feature type="strand" evidence="10">
    <location>
        <begin position="240"/>
        <end position="242"/>
    </location>
</feature>
<feature type="strand" evidence="10">
    <location>
        <begin position="247"/>
        <end position="253"/>
    </location>
</feature>
<feature type="strand" evidence="10">
    <location>
        <begin position="256"/>
        <end position="262"/>
    </location>
</feature>
<feature type="strand" evidence="10">
    <location>
        <begin position="265"/>
        <end position="268"/>
    </location>
</feature>
<feature type="strand" evidence="10">
    <location>
        <begin position="270"/>
        <end position="274"/>
    </location>
</feature>
<feature type="helix" evidence="10">
    <location>
        <begin position="278"/>
        <end position="283"/>
    </location>
</feature>
<feature type="helix" evidence="10">
    <location>
        <begin position="293"/>
        <end position="297"/>
    </location>
</feature>
<feature type="strand" evidence="10">
    <location>
        <begin position="303"/>
        <end position="313"/>
    </location>
</feature>
<feature type="strand" evidence="10">
    <location>
        <begin position="320"/>
        <end position="324"/>
    </location>
</feature>
<feature type="helix" evidence="10">
    <location>
        <begin position="329"/>
        <end position="337"/>
    </location>
</feature>
<feature type="strand" evidence="10">
    <location>
        <begin position="348"/>
        <end position="352"/>
    </location>
</feature>
<feature type="helix" evidence="10">
    <location>
        <begin position="353"/>
        <end position="355"/>
    </location>
</feature>
<feature type="helix" evidence="10">
    <location>
        <begin position="358"/>
        <end position="360"/>
    </location>
</feature>
<feature type="strand" evidence="10">
    <location>
        <begin position="366"/>
        <end position="374"/>
    </location>
</feature>
<feature type="helix" evidence="10">
    <location>
        <begin position="382"/>
        <end position="401"/>
    </location>
</feature>
<feature type="helix" evidence="10">
    <location>
        <begin position="405"/>
        <end position="407"/>
    </location>
</feature>
<feature type="strand" evidence="10">
    <location>
        <begin position="409"/>
        <end position="415"/>
    </location>
</feature>
<feature type="helix" evidence="10">
    <location>
        <begin position="417"/>
        <end position="424"/>
    </location>
</feature>
<feature type="helix" evidence="10">
    <location>
        <begin position="427"/>
        <end position="429"/>
    </location>
</feature>
<feature type="strand" evidence="10">
    <location>
        <begin position="431"/>
        <end position="434"/>
    </location>
</feature>
<feature type="strand" evidence="10">
    <location>
        <begin position="438"/>
        <end position="440"/>
    </location>
</feature>
<feature type="helix" evidence="10">
    <location>
        <begin position="441"/>
        <end position="444"/>
    </location>
</feature>
<feature type="strand" evidence="10">
    <location>
        <begin position="451"/>
        <end position="454"/>
    </location>
</feature>
<feature type="strand" evidence="10">
    <location>
        <begin position="456"/>
        <end position="458"/>
    </location>
</feature>
<feature type="strand" evidence="10">
    <location>
        <begin position="463"/>
        <end position="465"/>
    </location>
</feature>
<feature type="helix" evidence="10">
    <location>
        <begin position="469"/>
        <end position="487"/>
    </location>
</feature>
<name>CRTDH_NONDD</name>
<reference evidence="8" key="1">
    <citation type="journal article" date="2013" name="Genome Biol. Evol.">
        <title>Genomic makeup of the marine flavobacterium Nonlabens (Donghaeana) dokdonensis DSW-6 and identification of a novel class of rhodopsins.</title>
        <authorList>
            <person name="Kwon S.K."/>
            <person name="Kim B.K."/>
            <person name="Song J.Y."/>
            <person name="Kwak M.J."/>
            <person name="Lee C.H."/>
            <person name="Yoon J.H."/>
            <person name="Oh T.K."/>
            <person name="Kim J.F."/>
        </authorList>
    </citation>
    <scope>NUCLEOTIDE SEQUENCE [LARGE SCALE GENOMIC DNA]</scope>
    <source>
        <strain evidence="8">DSM 17205 / KCTC 12402 / DSW-6</strain>
    </source>
</reference>
<reference evidence="9" key="2">
    <citation type="journal article" date="2015" name="Enzyme Microb. Technol.">
        <title>Crystal structure of 1'-OH-carotenoid 3,4-desaturase from Nonlabens dokdonensis DSW-6.</title>
        <authorList>
            <person name="Ahn J.W."/>
            <person name="Kim K.J."/>
        </authorList>
    </citation>
    <scope>X-RAY CRYSTALLOGRAPHY (1.97 ANGSTROMS) IN COMPLEX WITH FAD</scope>
    <scope>SUBUNIT</scope>
</reference>
<evidence type="ECO:0000250" key="1">
    <source>
        <dbReference type="UniProtKB" id="Q7WT72"/>
    </source>
</evidence>
<evidence type="ECO:0000255" key="2">
    <source>
        <dbReference type="RuleBase" id="RU362075"/>
    </source>
</evidence>
<evidence type="ECO:0000269" key="3">
    <source>
    </source>
</evidence>
<evidence type="ECO:0000303" key="4">
    <source>
    </source>
</evidence>
<evidence type="ECO:0000305" key="5"/>
<evidence type="ECO:0000305" key="6">
    <source>
    </source>
</evidence>
<evidence type="ECO:0000312" key="7">
    <source>
        <dbReference type="EMBL" id="AGC77521.1"/>
    </source>
</evidence>
<evidence type="ECO:0000312" key="8">
    <source>
        <dbReference type="Proteomes" id="UP000011173"/>
    </source>
</evidence>
<evidence type="ECO:0007744" key="9">
    <source>
        <dbReference type="PDB" id="4REP"/>
    </source>
</evidence>
<evidence type="ECO:0007829" key="10">
    <source>
        <dbReference type="PDB" id="4REP"/>
    </source>
</evidence>
<comment type="function">
    <text evidence="1 6">Catalyzes the introduction of a C-3,4 double bond into 1'-hydroxy-gamma-carotene and rhodopin (1-hydroxylycopene) to yield 1'-hydroxytorulene and (3E)-3,4-didehydrorhodopin, respectively (By similarity). Can also use 1-hydroxy-all-trans-1,2-dihydro-neurosporene, 1,1'-dihydroxy-1,1',2,2'-tetrahydroneurosporene and 1,1'-dihydroxy-1,1',2,2'-tetrahydrolycopene (By similarity). Probably involved in the synthesis of myxol, a gamma-carotene derivative (Probable). May use FAD as a proton acceptor (Probable).</text>
</comment>
<comment type="catalytic activity">
    <reaction evidence="1">
        <text>rhodopin + A = (3E)-3,4-didehydrorhodopin + AH2</text>
        <dbReference type="Rhea" id="RHEA:30919"/>
        <dbReference type="ChEBI" id="CHEBI:13193"/>
        <dbReference type="ChEBI" id="CHEBI:17499"/>
        <dbReference type="ChEBI" id="CHEBI:35331"/>
        <dbReference type="ChEBI" id="CHEBI:62481"/>
        <dbReference type="EC" id="1.3.99.27"/>
    </reaction>
</comment>
<comment type="catalytic activity">
    <reaction evidence="1">
        <text>1'-hydroxy-gamma-carotene + A = 1'-hydroxytorulene + AH2</text>
        <dbReference type="Rhea" id="RHEA:59332"/>
        <dbReference type="ChEBI" id="CHEBI:13193"/>
        <dbReference type="ChEBI" id="CHEBI:17499"/>
        <dbReference type="ChEBI" id="CHEBI:80133"/>
        <dbReference type="ChEBI" id="CHEBI:80134"/>
    </reaction>
</comment>
<comment type="catalytic activity">
    <reaction evidence="1">
        <text>1-hydroxy-all-trans-1,2-dihydro-neurosporene + A = demethylspheroidene + AH2</text>
        <dbReference type="Rhea" id="RHEA:59336"/>
        <dbReference type="ChEBI" id="CHEBI:13193"/>
        <dbReference type="ChEBI" id="CHEBI:17499"/>
        <dbReference type="ChEBI" id="CHEBI:62505"/>
        <dbReference type="ChEBI" id="CHEBI:138077"/>
    </reaction>
</comment>
<comment type="catalytic activity">
    <reaction evidence="1">
        <text>1,1'-dihydroxy-1,1',2,2'-tetrahydroneurosporene + A = 1'-hydroxy-demethylspheroidene + AH2</text>
        <dbReference type="Rhea" id="RHEA:59340"/>
        <dbReference type="ChEBI" id="CHEBI:13193"/>
        <dbReference type="ChEBI" id="CHEBI:17499"/>
        <dbReference type="ChEBI" id="CHEBI:138076"/>
        <dbReference type="ChEBI" id="CHEBI:143013"/>
    </reaction>
</comment>
<comment type="catalytic activity">
    <reaction evidence="1">
        <text>1,1'-dihydroxy-1,1',2,2'-tetrahydrolycopene + A = 1,1'-dihydroxy-3,4-didehydro-1,2-dihydrolycopene + AH2</text>
        <dbReference type="Rhea" id="RHEA:59444"/>
        <dbReference type="ChEBI" id="CHEBI:13193"/>
        <dbReference type="ChEBI" id="CHEBI:17499"/>
        <dbReference type="ChEBI" id="CHEBI:63065"/>
        <dbReference type="ChEBI" id="CHEBI:132450"/>
    </reaction>
</comment>
<comment type="pathway">
    <text evidence="2">Carotenoid biosynthesis.</text>
</comment>
<comment type="subunit">
    <text evidence="3">Monomer.</text>
</comment>
<comment type="similarity">
    <text evidence="2">Belongs to the carotenoid/retinoid oxidoreductase family.</text>
</comment>
<gene>
    <name evidence="4" type="primary">crtD</name>
    <name evidence="7" type="ordered locus">DDD_2394</name>
</gene>
<sequence length="487" mass="54767">MKNAIVIGAGIGGLAAALRLRHQGYSVTIFEKNDYAGGKLHAIEKDGYRFDLGPSLFTLPHLVENLFALFPEEIIDFGYKSKAISFHYFWDDGTLFKASTDSSQFIEDASKVFKEEKSTIKKYLAKSKSKYELTKSLFLEKSLHKATTYFSLDTVKAIVHAPFLGLNNTLNDENSKFKNPKLTQLFNRYATYNGSSPYQTPGIMTMIPHLELGLGTYYPDGGMHRISQSLFELAQKVGVKFRFRESVTNITTSKNKVTGVETKNGSYLSDLVVSNMDIVPTYRNLMKDVPAPEKTLSQERSSSALIFYWGIDREFPELDLHNILFSEDYKTEFEHIFEHKTLAQDPTVYINITSKESSNDAPAGHENWFVMINAPGDYGQDWEQLVEESKKQIIAKIKKCLHVDISKHITTEYILTPQGIEKNTSSYRGALYGAASNNKFAAFLRHPNFNGKIKNLYHVGGSVHPGGGIPLCLLSAQITADLIQKEQ</sequence>
<protein>
    <recommendedName>
        <fullName evidence="4">1-hydroxycarotenoid 3,4-desaturase</fullName>
        <ecNumber evidence="1">1.3.99.27</ecNumber>
    </recommendedName>
    <alternativeName>
        <fullName evidence="5">1'-hydroxy-gamma-carotene 3,4-desaturase</fullName>
    </alternativeName>
    <alternativeName>
        <fullName evidence="1">1-hydroxycarotenoid 3,4-dehydrogenase</fullName>
    </alternativeName>
</protein>
<dbReference type="EC" id="1.3.99.27" evidence="1"/>
<dbReference type="EMBL" id="CP001397">
    <property type="protein sequence ID" value="AGC77521.1"/>
    <property type="molecule type" value="Genomic_DNA"/>
</dbReference>
<dbReference type="RefSeq" id="WP_015363018.1">
    <property type="nucleotide sequence ID" value="NC_020156.1"/>
</dbReference>
<dbReference type="PDB" id="4REP">
    <property type="method" value="X-ray"/>
    <property type="resolution" value="1.97 A"/>
    <property type="chains" value="A=1-487"/>
</dbReference>
<dbReference type="PDBsum" id="4REP"/>
<dbReference type="SMR" id="L7WC64"/>
<dbReference type="STRING" id="592029.DDD_2394"/>
<dbReference type="KEGG" id="ndo:DDD_2394"/>
<dbReference type="PATRIC" id="fig|592029.3.peg.2371"/>
<dbReference type="eggNOG" id="COG1233">
    <property type="taxonomic scope" value="Bacteria"/>
</dbReference>
<dbReference type="HOGENOM" id="CLU_019722_2_1_10"/>
<dbReference type="OrthoDB" id="9774675at2"/>
<dbReference type="BRENDA" id="1.3.99.27">
    <property type="organism ID" value="14193"/>
</dbReference>
<dbReference type="BRENDA" id="1.3.99.37">
    <property type="organism ID" value="14193"/>
</dbReference>
<dbReference type="EvolutionaryTrace" id="L7WC64"/>
<dbReference type="Proteomes" id="UP000011173">
    <property type="component" value="Chromosome"/>
</dbReference>
<dbReference type="GO" id="GO:0000166">
    <property type="term" value="F:nucleotide binding"/>
    <property type="evidence" value="ECO:0007669"/>
    <property type="project" value="UniProtKB-KW"/>
</dbReference>
<dbReference type="GO" id="GO:0016491">
    <property type="term" value="F:oxidoreductase activity"/>
    <property type="evidence" value="ECO:0007669"/>
    <property type="project" value="UniProtKB-KW"/>
</dbReference>
<dbReference type="GO" id="GO:0016117">
    <property type="term" value="P:carotenoid biosynthetic process"/>
    <property type="evidence" value="ECO:0007669"/>
    <property type="project" value="UniProtKB-KW"/>
</dbReference>
<dbReference type="FunFam" id="3.50.50.60:FF:000378">
    <property type="entry name" value="Phytoene desaturase"/>
    <property type="match status" value="1"/>
</dbReference>
<dbReference type="Gene3D" id="3.50.50.60">
    <property type="entry name" value="FAD/NAD(P)-binding domain"/>
    <property type="match status" value="2"/>
</dbReference>
<dbReference type="InterPro" id="IPR002937">
    <property type="entry name" value="Amino_oxidase"/>
</dbReference>
<dbReference type="InterPro" id="IPR014105">
    <property type="entry name" value="Carotenoid/retinoid_OxRdtase"/>
</dbReference>
<dbReference type="InterPro" id="IPR036188">
    <property type="entry name" value="FAD/NAD-bd_sf"/>
</dbReference>
<dbReference type="InterPro" id="IPR054840">
    <property type="entry name" value="hydcarot_desat_CrtD"/>
</dbReference>
<dbReference type="NCBIfam" id="TIGR02734">
    <property type="entry name" value="crtI_fam"/>
    <property type="match status" value="1"/>
</dbReference>
<dbReference type="NCBIfam" id="NF042421">
    <property type="entry name" value="hydcarot_desat_CrtD"/>
    <property type="match status" value="1"/>
</dbReference>
<dbReference type="PANTHER" id="PTHR43734:SF7">
    <property type="entry name" value="4,4'-DIAPONEUROSPORENE OXYGENASE"/>
    <property type="match status" value="1"/>
</dbReference>
<dbReference type="PANTHER" id="PTHR43734">
    <property type="entry name" value="PHYTOENE DESATURASE"/>
    <property type="match status" value="1"/>
</dbReference>
<dbReference type="Pfam" id="PF01593">
    <property type="entry name" value="Amino_oxidase"/>
    <property type="match status" value="1"/>
</dbReference>
<dbReference type="SUPFAM" id="SSF51905">
    <property type="entry name" value="FAD/NAD(P)-binding domain"/>
    <property type="match status" value="1"/>
</dbReference>
<accession>L7WC64</accession>
<proteinExistence type="evidence at protein level"/>